<protein>
    <recommendedName>
        <fullName>Intimin</fullName>
    </recommendedName>
    <alternativeName>
        <fullName>Attaching and effacing protein</fullName>
    </alternativeName>
    <alternativeName>
        <fullName>Outer membrane protein</fullName>
    </alternativeName>
</protein>
<comment type="function">
    <text evidence="1">An inverse autotransporter.</text>
</comment>
<comment type="subcellular location">
    <subcellularLocation>
        <location evidence="1">Cell outer membrane</location>
    </subcellularLocation>
</comment>
<comment type="similarity">
    <text evidence="4">Belongs to the intimin/invasin family.</text>
</comment>
<organism>
    <name type="scientific">Hafnia alvei</name>
    <dbReference type="NCBI Taxonomy" id="569"/>
    <lineage>
        <taxon>Bacteria</taxon>
        <taxon>Pseudomonadati</taxon>
        <taxon>Pseudomonadota</taxon>
        <taxon>Gammaproteobacteria</taxon>
        <taxon>Enterobacterales</taxon>
        <taxon>Hafniaceae</taxon>
        <taxon>Hafnia</taxon>
    </lineage>
</organism>
<sequence length="280" mass="30146">ITEIKADKTTAVANGKDAVTYTVKVMKDGKPLSGEEVTFTTTLGTLSKSTEKTNTNGYRKVSLTSANQGKSLVSASVTMPQLMLKLLEVEFFTQLTIDNGNVEIVGTGAKGKLPNVWLQYGQVNLKANGGNGKYTWYSANPAIASVDPSSGQVTLKDKGETTITVVSGDKQTAIYTIAMPNSIVSVNSSGRVDYNTANNICKNIKGSLPSSIKELKDLYDDWGAANKYQHYSQESITAWTLQTSENKVQGVASTYDLVRKNPLIDKVDIAGNYAYAVCVK</sequence>
<evidence type="ECO:0000250" key="1">
    <source>
        <dbReference type="UniProtKB" id="P19809"/>
    </source>
</evidence>
<evidence type="ECO:0000255" key="2"/>
<evidence type="ECO:0000255" key="3">
    <source>
        <dbReference type="PROSITE-ProRule" id="PRU00445"/>
    </source>
</evidence>
<evidence type="ECO:0000305" key="4"/>
<proteinExistence type="inferred from homology"/>
<gene>
    <name type="primary">eaeA</name>
    <name type="synonym">eae</name>
</gene>
<feature type="chain" id="PRO_0000211829" description="Intimin">
    <location>
        <begin position="1" status="less than"/>
        <end position="280"/>
    </location>
</feature>
<feature type="domain" description="Big-1" evidence="3">
    <location>
        <begin position="1"/>
        <end position="92"/>
    </location>
</feature>
<feature type="domain" description="BIG2" evidence="2">
    <location>
        <begin position="127"/>
        <end position="173"/>
    </location>
</feature>
<feature type="disulfide bond" evidence="1">
    <location>
        <begin position="201"/>
        <end position="278"/>
    </location>
</feature>
<feature type="non-terminal residue">
    <location>
        <position position="1"/>
    </location>
</feature>
<name>EAEA_HAFAL</name>
<keyword id="KW-0998">Cell outer membrane</keyword>
<keyword id="KW-1015">Disulfide bond</keyword>
<keyword id="KW-0472">Membrane</keyword>
<keyword id="KW-0843">Virulence</keyword>
<accession>P52869</accession>
<dbReference type="EMBL" id="L29509">
    <property type="protein sequence ID" value="AAA24937.1"/>
    <property type="molecule type" value="Genomic_DNA"/>
</dbReference>
<dbReference type="SMR" id="P52869"/>
<dbReference type="GO" id="GO:0009279">
    <property type="term" value="C:cell outer membrane"/>
    <property type="evidence" value="ECO:0007669"/>
    <property type="project" value="UniProtKB-SubCell"/>
</dbReference>
<dbReference type="Gene3D" id="2.60.40.1080">
    <property type="match status" value="1"/>
</dbReference>
<dbReference type="Gene3D" id="2.60.40.10">
    <property type="entry name" value="Immunoglobulins"/>
    <property type="match status" value="1"/>
</dbReference>
<dbReference type="Gene3D" id="3.10.100.10">
    <property type="entry name" value="Mannose-Binding Protein A, subunit A"/>
    <property type="match status" value="1"/>
</dbReference>
<dbReference type="InterPro" id="IPR003344">
    <property type="entry name" value="Big_1_dom"/>
</dbReference>
<dbReference type="InterPro" id="IPR003343">
    <property type="entry name" value="Big_2"/>
</dbReference>
<dbReference type="InterPro" id="IPR016186">
    <property type="entry name" value="C-type_lectin-like/link_sf"/>
</dbReference>
<dbReference type="InterPro" id="IPR016187">
    <property type="entry name" value="CTDL_fold"/>
</dbReference>
<dbReference type="InterPro" id="IPR013783">
    <property type="entry name" value="Ig-like_fold"/>
</dbReference>
<dbReference type="InterPro" id="IPR013117">
    <property type="entry name" value="Intimin_C"/>
</dbReference>
<dbReference type="InterPro" id="IPR008964">
    <property type="entry name" value="Invasin/intimin_cell_adhesion"/>
</dbReference>
<dbReference type="Pfam" id="PF02369">
    <property type="entry name" value="Big_1"/>
    <property type="match status" value="1"/>
</dbReference>
<dbReference type="Pfam" id="PF02368">
    <property type="entry name" value="Big_2"/>
    <property type="match status" value="1"/>
</dbReference>
<dbReference type="Pfam" id="PF07979">
    <property type="entry name" value="Intimin_C"/>
    <property type="match status" value="1"/>
</dbReference>
<dbReference type="SMART" id="SM00634">
    <property type="entry name" value="BID_1"/>
    <property type="match status" value="1"/>
</dbReference>
<dbReference type="SMART" id="SM00635">
    <property type="entry name" value="BID_2"/>
    <property type="match status" value="1"/>
</dbReference>
<dbReference type="SUPFAM" id="SSF56436">
    <property type="entry name" value="C-type lectin-like"/>
    <property type="match status" value="1"/>
</dbReference>
<dbReference type="SUPFAM" id="SSF49373">
    <property type="entry name" value="Invasin/intimin cell-adhesion fragments"/>
    <property type="match status" value="2"/>
</dbReference>
<dbReference type="PROSITE" id="PS51127">
    <property type="entry name" value="BIG1"/>
    <property type="match status" value="1"/>
</dbReference>
<reference key="1">
    <citation type="journal article" date="1994" name="Infect. Immun.">
        <title>Characterization of the C-terminal domains of intimin-like proteins of enteropathogenic and enterohemorrhagic Escherichia coli, Citrobacter freundii, and Hafnia alvei.</title>
        <authorList>
            <person name="Frankel G."/>
            <person name="Candy D.C.A."/>
            <person name="Everest P."/>
            <person name="Dougan G."/>
        </authorList>
    </citation>
    <scope>NUCLEOTIDE SEQUENCE [GENOMIC DNA]</scope>
</reference>